<protein>
    <recommendedName>
        <fullName>Delta(1)-pyrroline-2-carboxylate reductase 2</fullName>
        <shortName>Pyr2C reductase 2</shortName>
        <ecNumber evidence="1">1.5.1.49</ecNumber>
    </recommendedName>
    <alternativeName>
        <fullName evidence="2">Proline ketimine reductase 2</fullName>
    </alternativeName>
</protein>
<name>PYCR2_BURCM</name>
<accession>Q0B953</accession>
<proteinExistence type="evidence at protein level"/>
<comment type="function">
    <text evidence="1">Catalyzes the reduction of Delta(1)-pyrroline-2-carboxylate (Pyr2C) to L-proline, using preferentially NADPH over NADH as the electron donor. May be involved in a degradation pathway that converts trans-3-hydroxy-L-proline (t3LHyp) to L-proline.</text>
</comment>
<comment type="catalytic activity">
    <reaction evidence="1">
        <text>L-proline + NAD(+) = 1-pyrroline-2-carboxylate + NADH + H(+)</text>
        <dbReference type="Rhea" id="RHEA:20321"/>
        <dbReference type="ChEBI" id="CHEBI:15378"/>
        <dbReference type="ChEBI" id="CHEBI:39785"/>
        <dbReference type="ChEBI" id="CHEBI:57540"/>
        <dbReference type="ChEBI" id="CHEBI:57945"/>
        <dbReference type="ChEBI" id="CHEBI:60039"/>
        <dbReference type="EC" id="1.5.1.49"/>
    </reaction>
</comment>
<comment type="catalytic activity">
    <reaction evidence="1">
        <text>L-proline + NADP(+) = 1-pyrroline-2-carboxylate + NADPH + H(+)</text>
        <dbReference type="Rhea" id="RHEA:20317"/>
        <dbReference type="ChEBI" id="CHEBI:15378"/>
        <dbReference type="ChEBI" id="CHEBI:39785"/>
        <dbReference type="ChEBI" id="CHEBI:57783"/>
        <dbReference type="ChEBI" id="CHEBI:58349"/>
        <dbReference type="ChEBI" id="CHEBI:60039"/>
        <dbReference type="EC" id="1.5.1.49"/>
    </reaction>
</comment>
<comment type="biophysicochemical properties">
    <kinetics>
        <KM evidence="1">1.6 mM for Delta(1)-pyrroline-2-carboxylate (using NADPH as cosubstrate)</KM>
        <KM evidence="1">7.3 mM for Delta(1)-pyrroline-2-carboxylate (using NADH as cosubstrate)</KM>
        <text evidence="1">kcat is 106 sec(-1) for Pyr2C reduction using NADPH. kcat is 41 sec(-1) for Pyr2C reduction using NADH.</text>
    </kinetics>
</comment>
<comment type="similarity">
    <text evidence="3">Belongs to the ornithine cyclodeaminase/mu-crystallin family.</text>
</comment>
<evidence type="ECO:0000269" key="1">
    <source>
    </source>
</evidence>
<evidence type="ECO:0000303" key="2">
    <source>
    </source>
</evidence>
<evidence type="ECO:0000305" key="3"/>
<evidence type="ECO:0000312" key="4">
    <source>
        <dbReference type="EMBL" id="ABI89320.1"/>
    </source>
</evidence>
<sequence>MTALSRIPAFDAAETAALLDYPALLATLTHTVAEYAAGEIVSPERLVVPLQGGGVMLSMPSSARDLASHKLVNVCPGNAARGLPTILGQVSAYDATTGEMRFVLDGPTVTGRRTAAITALGIQALHGAAPRDILLIGTGKQAANHAEALAAIFPDARLHVRGSRAGSAAAFCAAHRAQAPQLAPLDGDAIPDAIDVVVTLTTSRTPVYREAAREGRLVVGVGAFTADAAEIDADTVRHSRLVVDDPAGARHEAGDLIVAQVDWQRVASLADVLRGAFERSGPLLFKTVGCAAWDLAACRTARDALDARRGG</sequence>
<gene>
    <name evidence="4" type="ordered locus">Bamb_3766</name>
</gene>
<organism>
    <name type="scientific">Burkholderia ambifaria (strain ATCC BAA-244 / DSM 16087 / CCUG 44356 / LMG 19182 / AMMD)</name>
    <name type="common">Burkholderia cepacia (strain AMMD)</name>
    <dbReference type="NCBI Taxonomy" id="339670"/>
    <lineage>
        <taxon>Bacteria</taxon>
        <taxon>Pseudomonadati</taxon>
        <taxon>Pseudomonadota</taxon>
        <taxon>Betaproteobacteria</taxon>
        <taxon>Burkholderiales</taxon>
        <taxon>Burkholderiaceae</taxon>
        <taxon>Burkholderia</taxon>
        <taxon>Burkholderia cepacia complex</taxon>
    </lineage>
</organism>
<keyword id="KW-0520">NAD</keyword>
<keyword id="KW-0521">NADP</keyword>
<keyword id="KW-0560">Oxidoreductase</keyword>
<reference key="1">
    <citation type="submission" date="2006-08" db="EMBL/GenBank/DDBJ databases">
        <title>Complete sequence of chromosome 2 of Burkholderia cepacia AMMD.</title>
        <authorList>
            <person name="Copeland A."/>
            <person name="Lucas S."/>
            <person name="Lapidus A."/>
            <person name="Barry K."/>
            <person name="Detter J.C."/>
            <person name="Glavina del Rio T."/>
            <person name="Hammon N."/>
            <person name="Israni S."/>
            <person name="Pitluck S."/>
            <person name="Bruce D."/>
            <person name="Chain P."/>
            <person name="Malfatti S."/>
            <person name="Shin M."/>
            <person name="Vergez L."/>
            <person name="Schmutz J."/>
            <person name="Larimer F."/>
            <person name="Land M."/>
            <person name="Hauser L."/>
            <person name="Kyrpides N."/>
            <person name="Kim E."/>
            <person name="Parke J."/>
            <person name="Coenye T."/>
            <person name="Konstantinidis K."/>
            <person name="Ramette A."/>
            <person name="Tiedje J."/>
            <person name="Richardson P."/>
        </authorList>
    </citation>
    <scope>NUCLEOTIDE SEQUENCE [LARGE SCALE GENOMIC DNA]</scope>
    <source>
        <strain>ATCC BAA-244 / DSM 16087 / CCUG 44356 / LMG 19182 / AMMD</strain>
    </source>
</reference>
<reference key="2">
    <citation type="journal article" date="2014" name="Elife">
        <title>Prediction and characterization of enzymatic activities guided by sequence similarity and genome neighborhood networks.</title>
        <authorList>
            <person name="Zhao S."/>
            <person name="Sakai A."/>
            <person name="Zhang X."/>
            <person name="Vetting M.W."/>
            <person name="Kumar R."/>
            <person name="Hillerich B."/>
            <person name="San Francisco B."/>
            <person name="Solbiati J."/>
            <person name="Steves A."/>
            <person name="Brown S."/>
            <person name="Akiva E."/>
            <person name="Barber A."/>
            <person name="Seidel R.D."/>
            <person name="Babbitt P.C."/>
            <person name="Almo S.C."/>
            <person name="Gerlt J.A."/>
            <person name="Jacobson M.P."/>
        </authorList>
    </citation>
    <scope>FUNCTION</scope>
    <scope>CATALYTIC ACTIVITY</scope>
    <scope>BIOPHYSICOCHEMICAL PROPERTIES</scope>
</reference>
<feature type="chain" id="PRO_0000432302" description="Delta(1)-pyrroline-2-carboxylate reductase 2">
    <location>
        <begin position="1"/>
        <end position="311"/>
    </location>
</feature>
<dbReference type="EC" id="1.5.1.49" evidence="1"/>
<dbReference type="EMBL" id="CP000441">
    <property type="protein sequence ID" value="ABI89320.1"/>
    <property type="molecule type" value="Genomic_DNA"/>
</dbReference>
<dbReference type="RefSeq" id="WP_011658776.1">
    <property type="nucleotide sequence ID" value="NC_008391.1"/>
</dbReference>
<dbReference type="SMR" id="Q0B953"/>
<dbReference type="GeneID" id="93086759"/>
<dbReference type="KEGG" id="bam:Bamb_3766"/>
<dbReference type="PATRIC" id="fig|339670.21.peg.4010"/>
<dbReference type="eggNOG" id="COG2423">
    <property type="taxonomic scope" value="Bacteria"/>
</dbReference>
<dbReference type="SABIO-RK" id="Q0B953"/>
<dbReference type="Proteomes" id="UP000000662">
    <property type="component" value="Chromosome 2"/>
</dbReference>
<dbReference type="GO" id="GO:0005737">
    <property type="term" value="C:cytoplasm"/>
    <property type="evidence" value="ECO:0007669"/>
    <property type="project" value="TreeGrafter"/>
</dbReference>
<dbReference type="GO" id="GO:0042562">
    <property type="term" value="F:hormone binding"/>
    <property type="evidence" value="ECO:0007669"/>
    <property type="project" value="TreeGrafter"/>
</dbReference>
<dbReference type="GO" id="GO:0016491">
    <property type="term" value="F:oxidoreductase activity"/>
    <property type="evidence" value="ECO:0007669"/>
    <property type="project" value="UniProtKB-KW"/>
</dbReference>
<dbReference type="Gene3D" id="3.40.50.720">
    <property type="entry name" value="NAD(P)-binding Rossmann-like Domain"/>
    <property type="match status" value="1"/>
</dbReference>
<dbReference type="Gene3D" id="3.30.1780.10">
    <property type="entry name" value="ornithine cyclodeaminase, domain 1"/>
    <property type="match status" value="1"/>
</dbReference>
<dbReference type="InterPro" id="IPR036291">
    <property type="entry name" value="NAD(P)-bd_dom_sf"/>
</dbReference>
<dbReference type="InterPro" id="IPR003462">
    <property type="entry name" value="ODC_Mu_crystall"/>
</dbReference>
<dbReference type="InterPro" id="IPR023401">
    <property type="entry name" value="ODC_N"/>
</dbReference>
<dbReference type="InterPro" id="IPR053444">
    <property type="entry name" value="Pyr2C_reductase-like"/>
</dbReference>
<dbReference type="NCBIfam" id="NF005603">
    <property type="entry name" value="PRK07340.1"/>
    <property type="match status" value="1"/>
</dbReference>
<dbReference type="NCBIfam" id="NF045512">
    <property type="entry name" value="PyrPipCarbRedLhpI"/>
    <property type="match status" value="1"/>
</dbReference>
<dbReference type="PANTHER" id="PTHR13812">
    <property type="entry name" value="KETIMINE REDUCTASE MU-CRYSTALLIN"/>
    <property type="match status" value="1"/>
</dbReference>
<dbReference type="PANTHER" id="PTHR13812:SF19">
    <property type="entry name" value="KETIMINE REDUCTASE MU-CRYSTALLIN"/>
    <property type="match status" value="1"/>
</dbReference>
<dbReference type="Pfam" id="PF02423">
    <property type="entry name" value="OCD_Mu_crystall"/>
    <property type="match status" value="1"/>
</dbReference>
<dbReference type="PIRSF" id="PIRSF001439">
    <property type="entry name" value="CryM"/>
    <property type="match status" value="1"/>
</dbReference>
<dbReference type="SUPFAM" id="SSF51735">
    <property type="entry name" value="NAD(P)-binding Rossmann-fold domains"/>
    <property type="match status" value="1"/>
</dbReference>